<proteinExistence type="inferred from homology"/>
<protein>
    <recommendedName>
        <fullName>V-type ATP synthase beta chain 1</fullName>
    </recommendedName>
    <alternativeName>
        <fullName>V-ATPase subunit B 1</fullName>
    </alternativeName>
</protein>
<feature type="chain" id="PRO_0000144683" description="V-type ATP synthase beta chain 1">
    <location>
        <begin position="1"/>
        <end position="430"/>
    </location>
</feature>
<name>VATB1_TREPA</name>
<dbReference type="EMBL" id="AE000520">
    <property type="protein sequence ID" value="AAC65413.1"/>
    <property type="molecule type" value="Genomic_DNA"/>
</dbReference>
<dbReference type="PIR" id="H71325">
    <property type="entry name" value="H71325"/>
</dbReference>
<dbReference type="RefSeq" id="WP_010881875.1">
    <property type="nucleotide sequence ID" value="NC_021490.2"/>
</dbReference>
<dbReference type="SMR" id="O83442"/>
<dbReference type="IntAct" id="O83442">
    <property type="interactions" value="2"/>
</dbReference>
<dbReference type="STRING" id="243276.TP_0427"/>
<dbReference type="TCDB" id="3.A.2.3.3">
    <property type="family name" value="the h+- or na+-translocating f-type, v-type and a-type atpase (f-atpase) superfamily"/>
</dbReference>
<dbReference type="EnsemblBacteria" id="AAC65413">
    <property type="protein sequence ID" value="AAC65413"/>
    <property type="gene ID" value="TP_0427"/>
</dbReference>
<dbReference type="KEGG" id="tpa:TP_0427"/>
<dbReference type="KEGG" id="tpw:TPANIC_0427"/>
<dbReference type="eggNOG" id="COG1156">
    <property type="taxonomic scope" value="Bacteria"/>
</dbReference>
<dbReference type="HOGENOM" id="CLU_022916_2_0_12"/>
<dbReference type="OrthoDB" id="9802718at2"/>
<dbReference type="Proteomes" id="UP000000811">
    <property type="component" value="Chromosome"/>
</dbReference>
<dbReference type="GO" id="GO:0005524">
    <property type="term" value="F:ATP binding"/>
    <property type="evidence" value="ECO:0007669"/>
    <property type="project" value="UniProtKB-UniRule"/>
</dbReference>
<dbReference type="GO" id="GO:0046933">
    <property type="term" value="F:proton-transporting ATP synthase activity, rotational mechanism"/>
    <property type="evidence" value="ECO:0007669"/>
    <property type="project" value="UniProtKB-UniRule"/>
</dbReference>
<dbReference type="GO" id="GO:0042777">
    <property type="term" value="P:proton motive force-driven plasma membrane ATP synthesis"/>
    <property type="evidence" value="ECO:0007669"/>
    <property type="project" value="UniProtKB-UniRule"/>
</dbReference>
<dbReference type="CDD" id="cd01135">
    <property type="entry name" value="V_A-ATPase_B"/>
    <property type="match status" value="1"/>
</dbReference>
<dbReference type="Gene3D" id="3.40.50.12240">
    <property type="match status" value="1"/>
</dbReference>
<dbReference type="HAMAP" id="MF_00310">
    <property type="entry name" value="ATP_synth_B_arch"/>
    <property type="match status" value="1"/>
</dbReference>
<dbReference type="InterPro" id="IPR055190">
    <property type="entry name" value="ATP-synt_VA_C"/>
</dbReference>
<dbReference type="InterPro" id="IPR004100">
    <property type="entry name" value="ATPase_F1/V1/A1_a/bsu_N"/>
</dbReference>
<dbReference type="InterPro" id="IPR000194">
    <property type="entry name" value="ATPase_F1/V1/A1_a/bsu_nucl-bd"/>
</dbReference>
<dbReference type="InterPro" id="IPR027417">
    <property type="entry name" value="P-loop_NTPase"/>
</dbReference>
<dbReference type="InterPro" id="IPR022879">
    <property type="entry name" value="V-ATPase_su_B/beta"/>
</dbReference>
<dbReference type="NCBIfam" id="NF002555">
    <property type="entry name" value="PRK02118.1"/>
    <property type="match status" value="1"/>
</dbReference>
<dbReference type="NCBIfam" id="NF003235">
    <property type="entry name" value="PRK04196.1"/>
    <property type="match status" value="1"/>
</dbReference>
<dbReference type="PANTHER" id="PTHR43389">
    <property type="entry name" value="V-TYPE PROTON ATPASE SUBUNIT B"/>
    <property type="match status" value="1"/>
</dbReference>
<dbReference type="PANTHER" id="PTHR43389:SF4">
    <property type="entry name" value="V-TYPE PROTON ATPASE SUBUNIT B"/>
    <property type="match status" value="1"/>
</dbReference>
<dbReference type="Pfam" id="PF00006">
    <property type="entry name" value="ATP-synt_ab"/>
    <property type="match status" value="1"/>
</dbReference>
<dbReference type="Pfam" id="PF02874">
    <property type="entry name" value="ATP-synt_ab_N"/>
    <property type="match status" value="1"/>
</dbReference>
<dbReference type="Pfam" id="PF22919">
    <property type="entry name" value="ATP-synt_VA_C"/>
    <property type="match status" value="1"/>
</dbReference>
<dbReference type="SUPFAM" id="SSF52540">
    <property type="entry name" value="P-loop containing nucleoside triphosphate hydrolases"/>
    <property type="match status" value="1"/>
</dbReference>
<keyword id="KW-0066">ATP synthesis</keyword>
<keyword id="KW-0375">Hydrogen ion transport</keyword>
<keyword id="KW-0406">Ion transport</keyword>
<keyword id="KW-1185">Reference proteome</keyword>
<keyword id="KW-0813">Transport</keyword>
<gene>
    <name type="primary">atpB1</name>
    <name type="ordered locus">TP_0427</name>
</gene>
<accession>O83442</accession>
<organism>
    <name type="scientific">Treponema pallidum (strain Nichols)</name>
    <dbReference type="NCBI Taxonomy" id="243276"/>
    <lineage>
        <taxon>Bacteria</taxon>
        <taxon>Pseudomonadati</taxon>
        <taxon>Spirochaetota</taxon>
        <taxon>Spirochaetia</taxon>
        <taxon>Spirochaetales</taxon>
        <taxon>Treponemataceae</taxon>
        <taxon>Treponema</taxon>
    </lineage>
</organism>
<comment type="function">
    <text evidence="1">Produces ATP from ADP in the presence of a proton gradient across the membrane. The V-type beta chain is a regulatory subunit (By similarity).</text>
</comment>
<comment type="similarity">
    <text evidence="2">Belongs to the ATPase alpha/beta chains family.</text>
</comment>
<reference key="1">
    <citation type="journal article" date="1998" name="Science">
        <title>Complete genome sequence of Treponema pallidum, the syphilis spirochete.</title>
        <authorList>
            <person name="Fraser C.M."/>
            <person name="Norris S.J."/>
            <person name="Weinstock G.M."/>
            <person name="White O."/>
            <person name="Sutton G.G."/>
            <person name="Dodson R.J."/>
            <person name="Gwinn M.L."/>
            <person name="Hickey E.K."/>
            <person name="Clayton R.A."/>
            <person name="Ketchum K.A."/>
            <person name="Sodergren E."/>
            <person name="Hardham J.M."/>
            <person name="McLeod M.P."/>
            <person name="Salzberg S.L."/>
            <person name="Peterson J.D."/>
            <person name="Khalak H.G."/>
            <person name="Richardson D.L."/>
            <person name="Howell J.K."/>
            <person name="Chidambaram M."/>
            <person name="Utterback T.R."/>
            <person name="McDonald L.A."/>
            <person name="Artiach P."/>
            <person name="Bowman C."/>
            <person name="Cotton M.D."/>
            <person name="Fujii C."/>
            <person name="Garland S.A."/>
            <person name="Hatch B."/>
            <person name="Horst K."/>
            <person name="Roberts K.M."/>
            <person name="Sandusky M."/>
            <person name="Weidman J.F."/>
            <person name="Smith H.O."/>
            <person name="Venter J.C."/>
        </authorList>
    </citation>
    <scope>NUCLEOTIDE SEQUENCE [LARGE SCALE GENOMIC DNA]</scope>
    <source>
        <strain>Nichols</strain>
    </source>
</reference>
<evidence type="ECO:0000250" key="1"/>
<evidence type="ECO:0000305" key="2"/>
<sequence length="430" mass="47229">MYKVYEKIESINGSVITVRAKGVHYGELARVKTAFGDSLAEVNKLEGDVVSLQVFAGGRGISTGSEVRFLGRGMLVSFSDYLLGRIFNGSGVPRDGGPALKEGRVEIGGPSVNPAKRVIARRMIRTGIPMIDVFNTLVVSQKLPIFSSSGEPYNELLARIAMQAEVDVIVLGGMGLKHDDYLYFKSALEEAGALSRAVLFVHTASDPTVECLMVPDMCLAVAEQFALKGRDVLVLLTDMTNFADAMKEIAIIQEQVPSNRGYPGDLYSQLASRYEKAVDFDDAGSVTILAVTTMPGDDVTHPVPDNTGYITEGQFYLKNGRIEPFGSLSRLKQNVNGRTRADHRALMDNMIKLYAAYRDALEKRSMGFAMSEWDEKLLTYGGLFEAQLMDLSVNIPLEEAFDTGWKILGRCFTPEETGIRSDLINTYWPA</sequence>